<keyword id="KW-0687">Ribonucleoprotein</keyword>
<keyword id="KW-0689">Ribosomal protein</keyword>
<keyword id="KW-0694">RNA-binding</keyword>
<keyword id="KW-0699">rRNA-binding</keyword>
<accession>Q3KLH0</accession>
<dbReference type="EMBL" id="CP000051">
    <property type="protein sequence ID" value="AAX50802.1"/>
    <property type="molecule type" value="Genomic_DNA"/>
</dbReference>
<dbReference type="RefSeq" id="WP_010725242.1">
    <property type="nucleotide sequence ID" value="NC_007429.1"/>
</dbReference>
<dbReference type="SMR" id="Q3KLH0"/>
<dbReference type="KEGG" id="cta:CTA_0576"/>
<dbReference type="HOGENOM" id="CLU_041575_5_2_0"/>
<dbReference type="Proteomes" id="UP000002532">
    <property type="component" value="Chromosome"/>
</dbReference>
<dbReference type="GO" id="GO:1990904">
    <property type="term" value="C:ribonucleoprotein complex"/>
    <property type="evidence" value="ECO:0007669"/>
    <property type="project" value="UniProtKB-KW"/>
</dbReference>
<dbReference type="GO" id="GO:0005840">
    <property type="term" value="C:ribosome"/>
    <property type="evidence" value="ECO:0007669"/>
    <property type="project" value="UniProtKB-KW"/>
</dbReference>
<dbReference type="GO" id="GO:0019843">
    <property type="term" value="F:rRNA binding"/>
    <property type="evidence" value="ECO:0007669"/>
    <property type="project" value="UniProtKB-UniRule"/>
</dbReference>
<dbReference type="GO" id="GO:0003735">
    <property type="term" value="F:structural constituent of ribosome"/>
    <property type="evidence" value="ECO:0007669"/>
    <property type="project" value="InterPro"/>
</dbReference>
<dbReference type="GO" id="GO:0006412">
    <property type="term" value="P:translation"/>
    <property type="evidence" value="ECO:0007669"/>
    <property type="project" value="UniProtKB-UniRule"/>
</dbReference>
<dbReference type="FunFam" id="3.40.1370.10:FF:000008">
    <property type="entry name" value="50S ribosomal protein L4"/>
    <property type="match status" value="1"/>
</dbReference>
<dbReference type="Gene3D" id="3.40.1370.10">
    <property type="match status" value="1"/>
</dbReference>
<dbReference type="HAMAP" id="MF_01328_B">
    <property type="entry name" value="Ribosomal_uL4_B"/>
    <property type="match status" value="1"/>
</dbReference>
<dbReference type="InterPro" id="IPR002136">
    <property type="entry name" value="Ribosomal_uL4"/>
</dbReference>
<dbReference type="InterPro" id="IPR013005">
    <property type="entry name" value="Ribosomal_uL4-like"/>
</dbReference>
<dbReference type="InterPro" id="IPR023574">
    <property type="entry name" value="Ribosomal_uL4_dom_sf"/>
</dbReference>
<dbReference type="NCBIfam" id="TIGR03953">
    <property type="entry name" value="rplD_bact"/>
    <property type="match status" value="1"/>
</dbReference>
<dbReference type="PANTHER" id="PTHR10746">
    <property type="entry name" value="50S RIBOSOMAL PROTEIN L4"/>
    <property type="match status" value="1"/>
</dbReference>
<dbReference type="PANTHER" id="PTHR10746:SF6">
    <property type="entry name" value="LARGE RIBOSOMAL SUBUNIT PROTEIN UL4M"/>
    <property type="match status" value="1"/>
</dbReference>
<dbReference type="Pfam" id="PF00573">
    <property type="entry name" value="Ribosomal_L4"/>
    <property type="match status" value="1"/>
</dbReference>
<dbReference type="SUPFAM" id="SSF52166">
    <property type="entry name" value="Ribosomal protein L4"/>
    <property type="match status" value="1"/>
</dbReference>
<proteinExistence type="inferred from homology"/>
<evidence type="ECO:0000255" key="1">
    <source>
        <dbReference type="HAMAP-Rule" id="MF_01328"/>
    </source>
</evidence>
<evidence type="ECO:0000256" key="2">
    <source>
        <dbReference type="SAM" id="MobiDB-lite"/>
    </source>
</evidence>
<evidence type="ECO:0000305" key="3"/>
<protein>
    <recommendedName>
        <fullName evidence="1">Large ribosomal subunit protein uL4</fullName>
    </recommendedName>
    <alternativeName>
        <fullName evidence="3">50S ribosomal protein L4</fullName>
    </alternativeName>
</protein>
<organism>
    <name type="scientific">Chlamydia trachomatis serovar A (strain ATCC VR-571B / DSM 19440 / HAR-13)</name>
    <dbReference type="NCBI Taxonomy" id="315277"/>
    <lineage>
        <taxon>Bacteria</taxon>
        <taxon>Pseudomonadati</taxon>
        <taxon>Chlamydiota</taxon>
        <taxon>Chlamydiia</taxon>
        <taxon>Chlamydiales</taxon>
        <taxon>Chlamydiaceae</taxon>
        <taxon>Chlamydia/Chlamydophila group</taxon>
        <taxon>Chlamydia</taxon>
    </lineage>
</organism>
<feature type="chain" id="PRO_0000242358" description="Large ribosomal subunit protein uL4">
    <location>
        <begin position="1"/>
        <end position="222"/>
    </location>
</feature>
<feature type="region of interest" description="Disordered" evidence="2">
    <location>
        <begin position="50"/>
        <end position="72"/>
    </location>
</feature>
<name>RL4_CHLTA</name>
<reference key="1">
    <citation type="journal article" date="2005" name="Infect. Immun.">
        <title>Comparative genomic analysis of Chlamydia trachomatis oculotropic and genitotropic strains.</title>
        <authorList>
            <person name="Carlson J.H."/>
            <person name="Porcella S.F."/>
            <person name="McClarty G."/>
            <person name="Caldwell H.D."/>
        </authorList>
    </citation>
    <scope>NUCLEOTIDE SEQUENCE [LARGE SCALE GENOMIC DNA]</scope>
    <source>
        <strain>ATCC VR-571B / DSM 19440 / HAR-13</strain>
    </source>
</reference>
<gene>
    <name evidence="1" type="primary">rplD</name>
    <name type="ordered locus">CTA_0576</name>
</gene>
<sequence>MVLLSKFDFSGKESGKFELPDAFFTEGKEQSVKDYLVAIQANKRQWSACTRGRSEVSHSTKKPFRQKGTGNARQGCLAAPQFRGGGIVFGPKPKFDQHIRINKKERRAAIRLLLAQKIQTGKLIVAENSVFVSSLDAPKTKEALRFLKECNVECRGVLFVDGLAHVGSNENLRLSVRNLSAVRGFTYGENISGYDIAAARNIVVSEKALELLVESLVSTTKD</sequence>
<comment type="function">
    <text evidence="1">One of the primary rRNA binding proteins, this protein initially binds near the 5'-end of the 23S rRNA. It is important during the early stages of 50S assembly. It makes multiple contacts with different domains of the 23S rRNA in the assembled 50S subunit and ribosome.</text>
</comment>
<comment type="function">
    <text evidence="1">Forms part of the polypeptide exit tunnel.</text>
</comment>
<comment type="subunit">
    <text evidence="1">Part of the 50S ribosomal subunit.</text>
</comment>
<comment type="similarity">
    <text evidence="1">Belongs to the universal ribosomal protein uL4 family.</text>
</comment>